<reference key="1">
    <citation type="submission" date="2007-09" db="EMBL/GenBank/DDBJ databases">
        <title>Complete genome sequencing of Rickettsia bellii.</title>
        <authorList>
            <person name="Madan A."/>
            <person name="Lee H."/>
            <person name="Madan A."/>
            <person name="Yoon J.-G."/>
            <person name="Ryu G.-Y."/>
            <person name="Dasch G."/>
            <person name="Ereemeva M."/>
        </authorList>
    </citation>
    <scope>NUCLEOTIDE SEQUENCE [LARGE SCALE GENOMIC DNA]</scope>
    <source>
        <strain>OSU 85-389</strain>
    </source>
</reference>
<sequence>MHNTDVLIIGAGPVGLFAIFQAGMLGMKCHVIDAQEVIGGQCITLYPEKPIYDIPAYPKIAAADLIKQLELQAAPFNPVYHLNQQAVELKKEGEFFEVKTSKDIVIKSKVIVIAAGAGSFGPNKPPLANIEEFENESVFYFINNRSKFTGKNIVIAGGGDSAVDWAISLSEIANKIYLVHRRDKFRAANESLRQLKDIAESGKIELVTGYQLDSLEGNNSELQSVIVRDLQNNTRKLNVNILLPFFGLKQELGNLVNWDLDIKLHHIEVDPVYYQTNISGIYAIGDVAHYSGKLKLILTGFAEAASSLHHAYGKVFDGNALHFEYSTTKYTQ</sequence>
<accession>A8GW75</accession>
<proteinExistence type="inferred from homology"/>
<gene>
    <name type="ordered locus">A1I_03745</name>
</gene>
<organism>
    <name type="scientific">Rickettsia bellii (strain OSU 85-389)</name>
    <dbReference type="NCBI Taxonomy" id="391896"/>
    <lineage>
        <taxon>Bacteria</taxon>
        <taxon>Pseudomonadati</taxon>
        <taxon>Pseudomonadota</taxon>
        <taxon>Alphaproteobacteria</taxon>
        <taxon>Rickettsiales</taxon>
        <taxon>Rickettsiaceae</taxon>
        <taxon>Rickettsieae</taxon>
        <taxon>Rickettsia</taxon>
        <taxon>belli group</taxon>
    </lineage>
</organism>
<protein>
    <recommendedName>
        <fullName evidence="1">Ferredoxin--NADP reductase</fullName>
        <shortName evidence="1">FNR</shortName>
        <shortName evidence="1">Fd-NADP(+) reductase</shortName>
        <ecNumber evidence="1">1.18.1.2</ecNumber>
    </recommendedName>
</protein>
<comment type="catalytic activity">
    <reaction evidence="1">
        <text>2 reduced [2Fe-2S]-[ferredoxin] + NADP(+) + H(+) = 2 oxidized [2Fe-2S]-[ferredoxin] + NADPH</text>
        <dbReference type="Rhea" id="RHEA:20125"/>
        <dbReference type="Rhea" id="RHEA-COMP:10000"/>
        <dbReference type="Rhea" id="RHEA-COMP:10001"/>
        <dbReference type="ChEBI" id="CHEBI:15378"/>
        <dbReference type="ChEBI" id="CHEBI:33737"/>
        <dbReference type="ChEBI" id="CHEBI:33738"/>
        <dbReference type="ChEBI" id="CHEBI:57783"/>
        <dbReference type="ChEBI" id="CHEBI:58349"/>
        <dbReference type="EC" id="1.18.1.2"/>
    </reaction>
</comment>
<comment type="cofactor">
    <cofactor evidence="1">
        <name>FAD</name>
        <dbReference type="ChEBI" id="CHEBI:57692"/>
    </cofactor>
    <text evidence="1">Binds 1 FAD per subunit.</text>
</comment>
<comment type="subunit">
    <text evidence="1">Homodimer.</text>
</comment>
<comment type="similarity">
    <text evidence="1">Belongs to the ferredoxin--NADP reductase type 2 family.</text>
</comment>
<feature type="chain" id="PRO_0000364921" description="Ferredoxin--NADP reductase">
    <location>
        <begin position="1"/>
        <end position="332"/>
    </location>
</feature>
<feature type="binding site" evidence="1">
    <location>
        <position position="33"/>
    </location>
    <ligand>
        <name>FAD</name>
        <dbReference type="ChEBI" id="CHEBI:57692"/>
    </ligand>
</feature>
<feature type="binding site" evidence="1">
    <location>
        <position position="41"/>
    </location>
    <ligand>
        <name>FAD</name>
        <dbReference type="ChEBI" id="CHEBI:57692"/>
    </ligand>
</feature>
<feature type="binding site" evidence="1">
    <location>
        <position position="46"/>
    </location>
    <ligand>
        <name>FAD</name>
        <dbReference type="ChEBI" id="CHEBI:57692"/>
    </ligand>
</feature>
<feature type="binding site" evidence="1">
    <location>
        <position position="86"/>
    </location>
    <ligand>
        <name>FAD</name>
        <dbReference type="ChEBI" id="CHEBI:57692"/>
    </ligand>
</feature>
<feature type="binding site" evidence="1">
    <location>
        <position position="120"/>
    </location>
    <ligand>
        <name>FAD</name>
        <dbReference type="ChEBI" id="CHEBI:57692"/>
    </ligand>
</feature>
<feature type="binding site" evidence="1">
    <location>
        <position position="286"/>
    </location>
    <ligand>
        <name>FAD</name>
        <dbReference type="ChEBI" id="CHEBI:57692"/>
    </ligand>
</feature>
<feature type="binding site" evidence="1">
    <location>
        <position position="327"/>
    </location>
    <ligand>
        <name>FAD</name>
        <dbReference type="ChEBI" id="CHEBI:57692"/>
    </ligand>
</feature>
<evidence type="ECO:0000255" key="1">
    <source>
        <dbReference type="HAMAP-Rule" id="MF_01685"/>
    </source>
</evidence>
<name>FENR_RICB8</name>
<dbReference type="EC" id="1.18.1.2" evidence="1"/>
<dbReference type="EMBL" id="CP000849">
    <property type="protein sequence ID" value="ABV79102.1"/>
    <property type="molecule type" value="Genomic_DNA"/>
</dbReference>
<dbReference type="RefSeq" id="WP_012151843.1">
    <property type="nucleotide sequence ID" value="NC_009883.1"/>
</dbReference>
<dbReference type="SMR" id="A8GW75"/>
<dbReference type="KEGG" id="rbo:A1I_03745"/>
<dbReference type="HOGENOM" id="CLU_031864_5_5_5"/>
<dbReference type="GO" id="GO:0004324">
    <property type="term" value="F:ferredoxin-NADP+ reductase activity"/>
    <property type="evidence" value="ECO:0007669"/>
    <property type="project" value="UniProtKB-UniRule"/>
</dbReference>
<dbReference type="GO" id="GO:0050660">
    <property type="term" value="F:flavin adenine dinucleotide binding"/>
    <property type="evidence" value="ECO:0007669"/>
    <property type="project" value="UniProtKB-UniRule"/>
</dbReference>
<dbReference type="GO" id="GO:0050661">
    <property type="term" value="F:NADP binding"/>
    <property type="evidence" value="ECO:0007669"/>
    <property type="project" value="UniProtKB-UniRule"/>
</dbReference>
<dbReference type="Gene3D" id="3.50.50.60">
    <property type="entry name" value="FAD/NAD(P)-binding domain"/>
    <property type="match status" value="2"/>
</dbReference>
<dbReference type="HAMAP" id="MF_01685">
    <property type="entry name" value="FENR2"/>
    <property type="match status" value="1"/>
</dbReference>
<dbReference type="InterPro" id="IPR036188">
    <property type="entry name" value="FAD/NAD-bd_sf"/>
</dbReference>
<dbReference type="InterPro" id="IPR023753">
    <property type="entry name" value="FAD/NAD-binding_dom"/>
</dbReference>
<dbReference type="InterPro" id="IPR022890">
    <property type="entry name" value="Fd--NADP_Rdtase_type_2"/>
</dbReference>
<dbReference type="InterPro" id="IPR050097">
    <property type="entry name" value="Ferredoxin-NADP_redctase_2"/>
</dbReference>
<dbReference type="PANTHER" id="PTHR48105">
    <property type="entry name" value="THIOREDOXIN REDUCTASE 1-RELATED-RELATED"/>
    <property type="match status" value="1"/>
</dbReference>
<dbReference type="Pfam" id="PF07992">
    <property type="entry name" value="Pyr_redox_2"/>
    <property type="match status" value="1"/>
</dbReference>
<dbReference type="PRINTS" id="PR00368">
    <property type="entry name" value="FADPNR"/>
</dbReference>
<dbReference type="PRINTS" id="PR00469">
    <property type="entry name" value="PNDRDTASEII"/>
</dbReference>
<dbReference type="SUPFAM" id="SSF51905">
    <property type="entry name" value="FAD/NAD(P)-binding domain"/>
    <property type="match status" value="1"/>
</dbReference>
<keyword id="KW-0274">FAD</keyword>
<keyword id="KW-0285">Flavoprotein</keyword>
<keyword id="KW-0521">NADP</keyword>
<keyword id="KW-0560">Oxidoreductase</keyword>